<feature type="chain" id="PRO_0000019939" description="Glucocorticoid receptor">
    <location>
        <begin position="1"/>
        <end position="792"/>
    </location>
</feature>
<feature type="domain" description="NR LBD" evidence="5">
    <location>
        <begin position="539"/>
        <end position="773"/>
    </location>
</feature>
<feature type="DNA-binding region" description="Nuclear receptor" evidence="4">
    <location>
        <begin position="434"/>
        <end position="509"/>
    </location>
</feature>
<feature type="zinc finger region" description="NR C4-type" evidence="4">
    <location>
        <begin position="437"/>
        <end position="457"/>
    </location>
</feature>
<feature type="zinc finger region" description="NR C4-type" evidence="4">
    <location>
        <begin position="473"/>
        <end position="497"/>
    </location>
</feature>
<feature type="region of interest" description="Modulating">
    <location>
        <begin position="1"/>
        <end position="436"/>
    </location>
</feature>
<feature type="region of interest" description="Disordered" evidence="6">
    <location>
        <begin position="1"/>
        <end position="25"/>
    </location>
</feature>
<feature type="region of interest" description="Disordered" evidence="6">
    <location>
        <begin position="67"/>
        <end position="98"/>
    </location>
</feature>
<feature type="region of interest" description="Disordered" evidence="6">
    <location>
        <begin position="148"/>
        <end position="201"/>
    </location>
</feature>
<feature type="region of interest" description="Interaction with CLOCK" evidence="1">
    <location>
        <begin position="501"/>
        <end position="792"/>
    </location>
</feature>
<feature type="region of interest" description="Hinge">
    <location>
        <begin position="503"/>
        <end position="538"/>
    </location>
</feature>
<feature type="region of interest" description="Interaction with CRY1" evidence="1">
    <location>
        <begin position="547"/>
        <end position="712"/>
    </location>
</feature>
<feature type="compositionally biased region" description="Basic and acidic residues" evidence="6">
    <location>
        <begin position="1"/>
        <end position="15"/>
    </location>
</feature>
<feature type="compositionally biased region" description="Low complexity" evidence="6">
    <location>
        <begin position="75"/>
        <end position="94"/>
    </location>
</feature>
<feature type="compositionally biased region" description="Polar residues" evidence="6">
    <location>
        <begin position="148"/>
        <end position="162"/>
    </location>
</feature>
<feature type="compositionally biased region" description="Polar residues" evidence="6">
    <location>
        <begin position="176"/>
        <end position="193"/>
    </location>
</feature>
<feature type="modified residue" description="Omega-N-methylarginine" evidence="34">
    <location>
        <position position="24"/>
    </location>
</feature>
<feature type="modified residue" description="Phosphoserine" evidence="2">
    <location>
        <position position="46"/>
    </location>
</feature>
<feature type="modified residue" description="Phosphoserine" evidence="16">
    <location>
        <position position="131"/>
    </location>
</feature>
<feature type="modified residue" description="Phosphoserine" evidence="2">
    <location>
        <position position="152"/>
    </location>
</feature>
<feature type="modified residue" description="Phosphoserine" evidence="16">
    <location>
        <position position="159"/>
    </location>
</feature>
<feature type="modified residue" description="Phosphothreonine" evidence="16">
    <location>
        <position position="168"/>
    </location>
</feature>
<feature type="modified residue" description="Phosphoserine" evidence="16 18">
    <location>
        <position position="221"/>
    </location>
</feature>
<feature type="modified residue" description="Phosphoserine" evidence="16 18">
    <location>
        <position position="229"/>
    </location>
</feature>
<feature type="modified residue" description="Phosphoserine" evidence="16 18">
    <location>
        <position position="243"/>
    </location>
</feature>
<feature type="modified residue" description="Phosphoserine" evidence="2">
    <location>
        <position position="284"/>
    </location>
</feature>
<feature type="modified residue" description="Phosphoserine" evidence="16">
    <location>
        <position position="324"/>
    </location>
</feature>
<feature type="modified residue" description="Phosphoserine" evidence="33">
    <location>
        <position position="421"/>
    </location>
</feature>
<feature type="modified residue" description="N6-acetyllysine" evidence="2">
    <location>
        <position position="496"/>
    </location>
</feature>
<feature type="modified residue" description="N6-acetyllysine" evidence="2">
    <location>
        <position position="508"/>
    </location>
</feature>
<feature type="modified residue" description="N6-acetyllysine" evidence="2">
    <location>
        <position position="510"/>
    </location>
</feature>
<feature type="modified residue" description="N6-acetyllysine" evidence="2">
    <location>
        <position position="511"/>
    </location>
</feature>
<feature type="cross-link" description="Glycyl lysine isopeptide (Lys-Gly) (interchain with G-Cter in SUMO); alternate" evidence="2">
    <location>
        <position position="294"/>
    </location>
</feature>
<feature type="cross-link" description="Glycyl lysine isopeptide (Lys-Gly) (interchain with G-Cter in SUMO2); alternate" evidence="2">
    <location>
        <position position="294"/>
    </location>
</feature>
<feature type="cross-link" description="Glycyl lysine isopeptide (Lys-Gly) (interchain with G-Cter in SUMO); alternate" evidence="2">
    <location>
        <position position="310"/>
    </location>
</feature>
<feature type="cross-link" description="Glycyl lysine isopeptide (Lys-Gly) (interchain with G-Cter in SUMO2); alternate" evidence="2">
    <location>
        <position position="310"/>
    </location>
</feature>
<feature type="cross-link" description="Glycyl lysine isopeptide (Lys-Gly) (interchain with G-Cter in ubiquitin)" evidence="32">
    <location>
        <position position="435"/>
    </location>
</feature>
<feature type="cross-link" description="Glycyl lysine isopeptide (Lys-Gly) (interchain with G-Cter in SUMO)" evidence="2">
    <location>
        <position position="718"/>
    </location>
</feature>
<feature type="splice variant" id="VSP_018774" description="In isoform 1-B and isoform 2-B." evidence="31">
    <location>
        <begin position="1"/>
        <end position="27"/>
    </location>
</feature>
<feature type="splice variant" id="VSP_003704" description="In isoform 2 and isoform 2-B." evidence="30">
    <original>G</original>
    <variation>GR</variation>
    <location>
        <position position="467"/>
    </location>
</feature>
<feature type="splice variant" id="VSP_058320" description="In isoform 3.">
    <original>VENLLSYCFQTFLD</original>
    <variation>STKHKSKTTAKKKK</variation>
    <location>
        <begin position="744"/>
        <end position="757"/>
    </location>
</feature>
<feature type="splice variant" id="VSP_058321" description="In isoform 3.">
    <location>
        <begin position="758"/>
        <end position="792"/>
    </location>
</feature>
<feature type="sequence variant" evidence="13 14 17 26">
    <location>
        <begin position="78"/>
        <end position="86"/>
    </location>
</feature>
<feature type="sequence variant" evidence="15">
    <location>
        <position position="91"/>
    </location>
</feature>
<feature type="mutagenesis site" description="Abolishes expression of A-type isoforms." evidence="10">
    <original>M</original>
    <variation>T</variation>
    <location>
        <position position="1"/>
    </location>
</feature>
<feature type="mutagenesis site" description="Abolishes expression of B-type isoforms. 1-B." evidence="10">
    <original>M</original>
    <variation>T</variation>
    <location>
        <position position="28"/>
    </location>
</feature>
<feature type="mutagenesis site" description="Abolishes glucocorticoid-mediated degradation and enhances transcription trans-activation." evidence="11">
    <original>K</original>
    <variation>A</variation>
    <location>
        <position position="435"/>
    </location>
</feature>
<feature type="mutagenesis site" description="Abolishes transactivation activity." evidence="21">
    <original>R</original>
    <variation>A</variation>
    <location>
        <position position="493"/>
    </location>
</feature>
<feature type="mutagenesis site" description="Abolishes transcriptional activity. Does not impair ligand binding." evidence="21">
    <original>R</original>
    <variation>C</variation>
    <location>
        <position position="493"/>
    </location>
</feature>
<feature type="mutagenesis site" description="Does not change transactivation activity." evidence="21">
    <original>R</original>
    <variation>K</variation>
    <location>
        <position position="493"/>
    </location>
</feature>
<feature type="sequence conflict" description="In Ref. 4; BAE33674." evidence="31" ref="4">
    <original>P</original>
    <variation>L</variation>
    <location>
        <position position="432"/>
    </location>
</feature>
<feature type="sequence conflict" description="In Ref. 1; CAA28031." evidence="31" ref="1">
    <original>G</original>
    <variation>V</variation>
    <location>
        <position position="446"/>
    </location>
</feature>
<feature type="sequence conflict" description="In Ref. 4; BAE33674." evidence="31" ref="4">
    <original>K</original>
    <variation>E</variation>
    <location>
        <position position="792"/>
    </location>
</feature>
<feature type="helix" evidence="35">
    <location>
        <begin position="547"/>
        <end position="554"/>
    </location>
</feature>
<feature type="helix" evidence="35">
    <location>
        <begin position="571"/>
        <end position="594"/>
    </location>
</feature>
<feature type="helix" evidence="35">
    <location>
        <begin position="599"/>
        <end position="601"/>
    </location>
</feature>
<feature type="helix" evidence="35">
    <location>
        <begin position="604"/>
        <end position="631"/>
    </location>
</feature>
<feature type="strand" evidence="35">
    <location>
        <begin position="634"/>
        <end position="639"/>
    </location>
</feature>
<feature type="strand" evidence="35">
    <location>
        <begin position="642"/>
        <end position="644"/>
    </location>
</feature>
<feature type="helix" evidence="35">
    <location>
        <begin position="646"/>
        <end position="649"/>
    </location>
</feature>
<feature type="turn" evidence="35">
    <location>
        <begin position="652"/>
        <end position="654"/>
    </location>
</feature>
<feature type="helix" evidence="35">
    <location>
        <begin position="655"/>
        <end position="671"/>
    </location>
</feature>
<feature type="helix" evidence="35">
    <location>
        <begin position="675"/>
        <end position="686"/>
    </location>
</feature>
<feature type="strand" evidence="35">
    <location>
        <begin position="688"/>
        <end position="691"/>
    </location>
</feature>
<feature type="helix" evidence="35">
    <location>
        <begin position="698"/>
        <end position="717"/>
    </location>
</feature>
<feature type="helix" evidence="35">
    <location>
        <begin position="723"/>
        <end position="756"/>
    </location>
</feature>
<feature type="helix" evidence="35">
    <location>
        <begin position="758"/>
        <end position="760"/>
    </location>
</feature>
<feature type="helix" evidence="35">
    <location>
        <begin position="766"/>
        <end position="780"/>
    </location>
</feature>
<feature type="strand" evidence="35">
    <location>
        <begin position="784"/>
        <end position="786"/>
    </location>
</feature>
<evidence type="ECO:0000250" key="1"/>
<evidence type="ECO:0000250" key="2">
    <source>
        <dbReference type="UniProtKB" id="P04150"/>
    </source>
</evidence>
<evidence type="ECO:0000250" key="3">
    <source>
        <dbReference type="UniProtKB" id="P06536"/>
    </source>
</evidence>
<evidence type="ECO:0000255" key="4">
    <source>
        <dbReference type="PROSITE-ProRule" id="PRU00407"/>
    </source>
</evidence>
<evidence type="ECO:0000255" key="5">
    <source>
        <dbReference type="PROSITE-ProRule" id="PRU01189"/>
    </source>
</evidence>
<evidence type="ECO:0000256" key="6">
    <source>
        <dbReference type="SAM" id="MobiDB-lite"/>
    </source>
</evidence>
<evidence type="ECO:0000269" key="7">
    <source>
    </source>
</evidence>
<evidence type="ECO:0000269" key="8">
    <source>
    </source>
</evidence>
<evidence type="ECO:0000269" key="9">
    <source>
    </source>
</evidence>
<evidence type="ECO:0000269" key="10">
    <source>
    </source>
</evidence>
<evidence type="ECO:0000269" key="11">
    <source>
    </source>
</evidence>
<evidence type="ECO:0000269" key="12">
    <source>
    </source>
</evidence>
<evidence type="ECO:0000269" key="13">
    <source>
    </source>
</evidence>
<evidence type="ECO:0000269" key="14">
    <source>
    </source>
</evidence>
<evidence type="ECO:0000269" key="15">
    <source>
    </source>
</evidence>
<evidence type="ECO:0000269" key="16">
    <source>
    </source>
</evidence>
<evidence type="ECO:0000269" key="17">
    <source>
    </source>
</evidence>
<evidence type="ECO:0000269" key="18">
    <source>
    </source>
</evidence>
<evidence type="ECO:0000269" key="19">
    <source>
    </source>
</evidence>
<evidence type="ECO:0000269" key="20">
    <source>
    </source>
</evidence>
<evidence type="ECO:0000269" key="21">
    <source>
    </source>
</evidence>
<evidence type="ECO:0000269" key="22">
    <source>
    </source>
</evidence>
<evidence type="ECO:0000269" key="23">
    <source>
    </source>
</evidence>
<evidence type="ECO:0000269" key="24">
    <source>
    </source>
</evidence>
<evidence type="ECO:0000269" key="25">
    <source>
    </source>
</evidence>
<evidence type="ECO:0000269" key="26">
    <source>
    </source>
</evidence>
<evidence type="ECO:0000269" key="27">
    <source>
    </source>
</evidence>
<evidence type="ECO:0000269" key="28">
    <source>
    </source>
</evidence>
<evidence type="ECO:0000269" key="29">
    <source>
    </source>
</evidence>
<evidence type="ECO:0000303" key="30">
    <source>
    </source>
</evidence>
<evidence type="ECO:0000305" key="31"/>
<evidence type="ECO:0000305" key="32">
    <source>
    </source>
</evidence>
<evidence type="ECO:0007744" key="33">
    <source>
    </source>
</evidence>
<evidence type="ECO:0007744" key="34">
    <source>
    </source>
</evidence>
<evidence type="ECO:0007829" key="35">
    <source>
        <dbReference type="PDB" id="3MNP"/>
    </source>
</evidence>
<proteinExistence type="evidence at protein level"/>
<protein>
    <recommendedName>
        <fullName>Glucocorticoid receptor</fullName>
        <shortName>GR</shortName>
    </recommendedName>
    <alternativeName>
        <fullName>Nuclear receptor subfamily 3 group C member 1</fullName>
    </alternativeName>
</protein>
<sequence>MDSKESLAPPGRDEVPSSLLGRGRGSVMDLYKTLRGGATVKVSASSPSVAAASQADSKQQRILLDFSKGSASNAQQQQQQQQQQQQQQQQQPQPDLSKAVSLSMGLYMGETETKVMGNDLGYPQQGQLGLSSGETDFRLLEESIANLNRSTSRPENPKSSTPAAGCATPTEKEFPQTHSDPSSEQQNRKSQPGTNGGSVKLYTTDQSTFDILQDLEFSAGSPGKETNESPWRSDLLIDENLLSPLAGEDDPFLLEGDVNEDCKPLILPDTKPKIQDTGDTILSSPSSVALPQVKTEKDDFIELCTPGVIKQEKLGPVYCQASFSGTNIIGNKMSAISVHGVSTSGGQMYHYDMNTASLSQQQDQKPVFNVIPPIPVGSENWNRCQGSGEDNLTSLGAMNFAGRSVFSNGYSSPGMRPDVSSPPSSSSTATGPPPKLCLVCSDEASGCHYGVLTCGSCKVFFKRAVEGQHNYLCAGRNDCIIDKIRRKNCPACRYRKCLQAGMNLEARKTKKKIKGIQQATAGVSQDTSENANKTIVPAALPQLTPTLVSLLEVIEPEVLYAGYDSSVPDSAWRIMTTLNMLGGRQVIAAVKWAKAIPGFRNLHLDDQMTLLQYSWMFLMAFALGWRSYRQASGNLLCFAPDLIINEQRMTLPCMYDQCKHMLFISTELQRLQVSYEEYLCMKTLLLLSSVPKEGLKSQELFDEIRMTYIKELGKAIVKREGNSSQNWQRFYQLTKLLDSMHDVVENLLSYCFQTFLDKSMSIEFPEMLAEIITNQIPKYSNGNIKKLLFHQK</sequence>
<gene>
    <name type="primary">Nr3c1</name>
    <name type="synonym">Grl</name>
    <name type="synonym">Grl1</name>
</gene>
<reference key="1">
    <citation type="journal article" date="1986" name="EMBO J.">
        <title>The mouse glucocorticoid receptor: mapping of functional domains by cloning, sequencing and expression of wild-type and mutant receptor proteins.</title>
        <authorList>
            <person name="Danielsen M."/>
            <person name="Northrop J.P."/>
            <person name="Ringold G.M."/>
        </authorList>
    </citation>
    <scope>NUCLEOTIDE SEQUENCE [MRNA] (ISOFORM 1)</scope>
    <scope>VARIANT 78-GLN--GLN-86 DEL</scope>
</reference>
<reference key="2">
    <citation type="journal article" date="2006" name="FASEB J.">
        <title>A polymorphic glucocorticoid receptor in a mouse population may explain inherited altered stress response and increased anxiety-type behaviors.</title>
        <authorList>
            <person name="Xu D."/>
            <person name="Buehner A."/>
            <person name="Xu J."/>
            <person name="Lambert T."/>
            <person name="Nekl C."/>
            <person name="Nielsen M.K."/>
            <person name="Zhou Y."/>
        </authorList>
    </citation>
    <scope>NUCLEOTIDE SEQUENCE [MRNA] (ISOFORM 1)</scope>
    <scope>VARIANT GLN-91 DEL</scope>
    <scope>POLYMORPHISM</scope>
</reference>
<reference key="3">
    <citation type="journal article" date="2010" name="Mol. Endocrinol.">
        <title>Discovery of glucocorticoid receptor-beta in mice with a role in metabolism.</title>
        <authorList>
            <person name="Hinds T.D. Jr."/>
            <person name="Ramakrishnan S."/>
            <person name="Cash H.A."/>
            <person name="Stechschulte L.A."/>
            <person name="Heinrich G."/>
            <person name="Najjar S.M."/>
            <person name="Sanchez E.R."/>
        </authorList>
    </citation>
    <scope>NUCLEOTIDE SEQUENCE [MRNA] (ISOFORM 3)</scope>
    <scope>FUNCTION</scope>
    <scope>SUBCELLULAR LOCATION</scope>
    <scope>TISSUE SPECIFICITY</scope>
    <scope>INDUCTION</scope>
    <scope>VARIANT 78-GLN--GLN-86 DEL</scope>
</reference>
<reference key="4">
    <citation type="journal article" date="2005" name="Science">
        <title>The transcriptional landscape of the mammalian genome.</title>
        <authorList>
            <person name="Carninci P."/>
            <person name="Kasukawa T."/>
            <person name="Katayama S."/>
            <person name="Gough J."/>
            <person name="Frith M.C."/>
            <person name="Maeda N."/>
            <person name="Oyama R."/>
            <person name="Ravasi T."/>
            <person name="Lenhard B."/>
            <person name="Wells C."/>
            <person name="Kodzius R."/>
            <person name="Shimokawa K."/>
            <person name="Bajic V.B."/>
            <person name="Brenner S.E."/>
            <person name="Batalov S."/>
            <person name="Forrest A.R."/>
            <person name="Zavolan M."/>
            <person name="Davis M.J."/>
            <person name="Wilming L.G."/>
            <person name="Aidinis V."/>
            <person name="Allen J.E."/>
            <person name="Ambesi-Impiombato A."/>
            <person name="Apweiler R."/>
            <person name="Aturaliya R.N."/>
            <person name="Bailey T.L."/>
            <person name="Bansal M."/>
            <person name="Baxter L."/>
            <person name="Beisel K.W."/>
            <person name="Bersano T."/>
            <person name="Bono H."/>
            <person name="Chalk A.M."/>
            <person name="Chiu K.P."/>
            <person name="Choudhary V."/>
            <person name="Christoffels A."/>
            <person name="Clutterbuck D.R."/>
            <person name="Crowe M.L."/>
            <person name="Dalla E."/>
            <person name="Dalrymple B.P."/>
            <person name="de Bono B."/>
            <person name="Della Gatta G."/>
            <person name="di Bernardo D."/>
            <person name="Down T."/>
            <person name="Engstrom P."/>
            <person name="Fagiolini M."/>
            <person name="Faulkner G."/>
            <person name="Fletcher C.F."/>
            <person name="Fukushima T."/>
            <person name="Furuno M."/>
            <person name="Futaki S."/>
            <person name="Gariboldi M."/>
            <person name="Georgii-Hemming P."/>
            <person name="Gingeras T.R."/>
            <person name="Gojobori T."/>
            <person name="Green R.E."/>
            <person name="Gustincich S."/>
            <person name="Harbers M."/>
            <person name="Hayashi Y."/>
            <person name="Hensch T.K."/>
            <person name="Hirokawa N."/>
            <person name="Hill D."/>
            <person name="Huminiecki L."/>
            <person name="Iacono M."/>
            <person name="Ikeo K."/>
            <person name="Iwama A."/>
            <person name="Ishikawa T."/>
            <person name="Jakt M."/>
            <person name="Kanapin A."/>
            <person name="Katoh M."/>
            <person name="Kawasawa Y."/>
            <person name="Kelso J."/>
            <person name="Kitamura H."/>
            <person name="Kitano H."/>
            <person name="Kollias G."/>
            <person name="Krishnan S.P."/>
            <person name="Kruger A."/>
            <person name="Kummerfeld S.K."/>
            <person name="Kurochkin I.V."/>
            <person name="Lareau L.F."/>
            <person name="Lazarevic D."/>
            <person name="Lipovich L."/>
            <person name="Liu J."/>
            <person name="Liuni S."/>
            <person name="McWilliam S."/>
            <person name="Madan Babu M."/>
            <person name="Madera M."/>
            <person name="Marchionni L."/>
            <person name="Matsuda H."/>
            <person name="Matsuzawa S."/>
            <person name="Miki H."/>
            <person name="Mignone F."/>
            <person name="Miyake S."/>
            <person name="Morris K."/>
            <person name="Mottagui-Tabar S."/>
            <person name="Mulder N."/>
            <person name="Nakano N."/>
            <person name="Nakauchi H."/>
            <person name="Ng P."/>
            <person name="Nilsson R."/>
            <person name="Nishiguchi S."/>
            <person name="Nishikawa S."/>
            <person name="Nori F."/>
            <person name="Ohara O."/>
            <person name="Okazaki Y."/>
            <person name="Orlando V."/>
            <person name="Pang K.C."/>
            <person name="Pavan W.J."/>
            <person name="Pavesi G."/>
            <person name="Pesole G."/>
            <person name="Petrovsky N."/>
            <person name="Piazza S."/>
            <person name="Reed J."/>
            <person name="Reid J.F."/>
            <person name="Ring B.Z."/>
            <person name="Ringwald M."/>
            <person name="Rost B."/>
            <person name="Ruan Y."/>
            <person name="Salzberg S.L."/>
            <person name="Sandelin A."/>
            <person name="Schneider C."/>
            <person name="Schoenbach C."/>
            <person name="Sekiguchi K."/>
            <person name="Semple C.A."/>
            <person name="Seno S."/>
            <person name="Sessa L."/>
            <person name="Sheng Y."/>
            <person name="Shibata Y."/>
            <person name="Shimada H."/>
            <person name="Shimada K."/>
            <person name="Silva D."/>
            <person name="Sinclair B."/>
            <person name="Sperling S."/>
            <person name="Stupka E."/>
            <person name="Sugiura K."/>
            <person name="Sultana R."/>
            <person name="Takenaka Y."/>
            <person name="Taki K."/>
            <person name="Tammoja K."/>
            <person name="Tan S.L."/>
            <person name="Tang S."/>
            <person name="Taylor M.S."/>
            <person name="Tegner J."/>
            <person name="Teichmann S.A."/>
            <person name="Ueda H.R."/>
            <person name="van Nimwegen E."/>
            <person name="Verardo R."/>
            <person name="Wei C.L."/>
            <person name="Yagi K."/>
            <person name="Yamanishi H."/>
            <person name="Zabarovsky E."/>
            <person name="Zhu S."/>
            <person name="Zimmer A."/>
            <person name="Hide W."/>
            <person name="Bult C."/>
            <person name="Grimmond S.M."/>
            <person name="Teasdale R.D."/>
            <person name="Liu E.T."/>
            <person name="Brusic V."/>
            <person name="Quackenbush J."/>
            <person name="Wahlestedt C."/>
            <person name="Mattick J.S."/>
            <person name="Hume D.A."/>
            <person name="Kai C."/>
            <person name="Sasaki D."/>
            <person name="Tomaru Y."/>
            <person name="Fukuda S."/>
            <person name="Kanamori-Katayama M."/>
            <person name="Suzuki M."/>
            <person name="Aoki J."/>
            <person name="Arakawa T."/>
            <person name="Iida J."/>
            <person name="Imamura K."/>
            <person name="Itoh M."/>
            <person name="Kato T."/>
            <person name="Kawaji H."/>
            <person name="Kawagashira N."/>
            <person name="Kawashima T."/>
            <person name="Kojima M."/>
            <person name="Kondo S."/>
            <person name="Konno H."/>
            <person name="Nakano K."/>
            <person name="Ninomiya N."/>
            <person name="Nishio T."/>
            <person name="Okada M."/>
            <person name="Plessy C."/>
            <person name="Shibata K."/>
            <person name="Shiraki T."/>
            <person name="Suzuki S."/>
            <person name="Tagami M."/>
            <person name="Waki K."/>
            <person name="Watahiki A."/>
            <person name="Okamura-Oho Y."/>
            <person name="Suzuki H."/>
            <person name="Kawai J."/>
            <person name="Hayashizaki Y."/>
        </authorList>
    </citation>
    <scope>NUCLEOTIDE SEQUENCE [LARGE SCALE MRNA] (ISOFORM 1)</scope>
    <scope>VARIANT 78-GLN--GLN-86 DEL</scope>
    <source>
        <strain>NOD</strain>
    </source>
</reference>
<reference key="5">
    <citation type="journal article" date="2009" name="PLoS Biol.">
        <title>Lineage-specific biology revealed by a finished genome assembly of the mouse.</title>
        <authorList>
            <person name="Church D.M."/>
            <person name="Goodstadt L."/>
            <person name="Hillier L.W."/>
            <person name="Zody M.C."/>
            <person name="Goldstein S."/>
            <person name="She X."/>
            <person name="Bult C.J."/>
            <person name="Agarwala R."/>
            <person name="Cherry J.L."/>
            <person name="DiCuccio M."/>
            <person name="Hlavina W."/>
            <person name="Kapustin Y."/>
            <person name="Meric P."/>
            <person name="Maglott D."/>
            <person name="Birtle Z."/>
            <person name="Marques A.C."/>
            <person name="Graves T."/>
            <person name="Zhou S."/>
            <person name="Teague B."/>
            <person name="Potamousis K."/>
            <person name="Churas C."/>
            <person name="Place M."/>
            <person name="Herschleb J."/>
            <person name="Runnheim R."/>
            <person name="Forrest D."/>
            <person name="Amos-Landgraf J."/>
            <person name="Schwartz D.C."/>
            <person name="Cheng Z."/>
            <person name="Lindblad-Toh K."/>
            <person name="Eichler E.E."/>
            <person name="Ponting C.P."/>
        </authorList>
    </citation>
    <scope>NUCLEOTIDE SEQUENCE [LARGE SCALE GENOMIC DNA]</scope>
    <source>
        <strain>C57BL/6J</strain>
    </source>
</reference>
<reference key="6">
    <citation type="journal article" date="2004" name="Genome Res.">
        <title>The status, quality, and expansion of the NIH full-length cDNA project: the Mammalian Gene Collection (MGC).</title>
        <authorList>
            <consortium name="The MGC Project Team"/>
        </authorList>
    </citation>
    <scope>NUCLEOTIDE SEQUENCE [LARGE SCALE MRNA] (ISOFORM 1)</scope>
    <scope>VARIANT 78-GLN--GLN-86 DEL</scope>
</reference>
<reference key="7">
    <citation type="journal article" date="1989" name="Nucleic Acids Res.">
        <title>Novel cDNA sequence possibly generated by alternative splicing of a mouse glucocorticoid receptor gene transcript from Shionogi carcinoma 115.</title>
        <authorList>
            <person name="Nohno T."/>
            <person name="Kasai Y."/>
            <person name="Saito T."/>
        </authorList>
    </citation>
    <scope>NUCLEOTIDE SEQUENCE [MRNA] OF 1-764 (ISOFORMS 1 AND 2)</scope>
</reference>
<reference key="8">
    <citation type="journal article" date="1989" name="Cancer Res.">
        <title>Regulation of glucocorticoid receptor protein and mRNA levels.</title>
        <authorList>
            <person name="Vedeckis W.V."/>
            <person name="Ali M."/>
            <person name="Allen H.R."/>
        </authorList>
    </citation>
    <scope>GLUCOCORTICOID-MEDIATED DOWN-REGULATION</scope>
</reference>
<reference key="9">
    <citation type="journal article" date="1991" name="J. Biol. Chem.">
        <title>Identification of phosphorylated sites in the mouse glucocorticoid receptor.</title>
        <authorList>
            <person name="Bodwell J.E."/>
            <person name="Orti E."/>
            <person name="Coull J.M."/>
            <person name="Pappin D.J.C."/>
            <person name="Smith L.I."/>
            <person name="Swift F."/>
        </authorList>
    </citation>
    <scope>PHOSPHORYLATION AT SER-131; SER-159; THR-168; SER-221; SER-229; SER-243 AND SER-324</scope>
</reference>
<reference key="10">
    <citation type="journal article" date="1997" name="J. Biol. Chem.">
        <title>Protein phosphatase 5 is a major component of glucocorticoid receptor.hsp90 complexes with properties of an FK506-binding immunophilin.</title>
        <authorList>
            <person name="Silverstein A.M."/>
            <person name="Galigniana M.D."/>
            <person name="Chen M.S."/>
            <person name="Owens-Grillo J.K."/>
            <person name="Chinkers M."/>
            <person name="Pratt W.B."/>
        </authorList>
    </citation>
    <scope>IDENTIFICATION IN A COMPLEX WITH NR3C1 AND FKBP4; PPID; PPP5C OR STIP1</scope>
</reference>
<reference key="11">
    <citation type="journal article" date="1998" name="Mol. Cell. Biol.">
        <title>Characterization of Stat5a and Stat5b homodimers and heterodimers and their association with the glucocortiocoid receptor in mammary cells.</title>
        <authorList>
            <person name="Cella N."/>
            <person name="Groner B."/>
            <person name="Hynes N.E."/>
        </authorList>
    </citation>
    <scope>INTERACTION WITH STAT5A AND STAT5B</scope>
</reference>
<reference key="12">
    <citation type="journal article" date="1998" name="Mol. Cell. Biol.">
        <title>Coactivator TIF1beta interacts with transcription factor C/EBPbeta and glucocorticoid receptor to induce alpha1-acid glycoprotein gene expression.</title>
        <authorList>
            <person name="Chang C.J."/>
            <person name="Chen Y.L."/>
            <person name="Lee S.C."/>
        </authorList>
    </citation>
    <scope>INTERACTION WITH TRIM28</scope>
</reference>
<reference key="13">
    <citation type="journal article" date="2000" name="Mol. Biol. Cell">
        <title>Interaction of the tau2 transcriptional activation domain of glucocorticoid receptor with a novel steroid receptor coactivator, Hic-5, which localizes to both focal adhesions and the nuclear matrix.</title>
        <authorList>
            <person name="Yang L."/>
            <person name="Guerrero J."/>
            <person name="Hong H."/>
            <person name="DeFranco D.B."/>
            <person name="Stallcup M.R."/>
        </authorList>
    </citation>
    <scope>INTERACTION WITH TGFB1I1</scope>
</reference>
<reference key="14">
    <citation type="journal article" date="2000" name="Science">
        <title>The glucocorticoid receptor: rapid exchange with regulatory sites in living cells.</title>
        <authorList>
            <person name="McNally J.G."/>
            <person name="Mueller W.G."/>
            <person name="Walker D."/>
            <person name="Wolford R."/>
            <person name="Hager G.L."/>
        </authorList>
    </citation>
    <scope>FUNCTION</scope>
    <scope>SUBCELLULAR LOCATION</scope>
</reference>
<reference key="15">
    <citation type="journal article" date="2001" name="J. Biol. Chem.">
        <title>Evidence that the peptidylprolyl isomerase domain of the hsp90-binding immunophilin FKBP52 is involved in both dynein interaction and glucocorticoid receptor movement to the nucleus.</title>
        <authorList>
            <person name="Galigniana M.D."/>
            <person name="Radanyi C."/>
            <person name="Renoir J.-M."/>
            <person name="Housley P.R."/>
            <person name="Pratt W.B."/>
        </authorList>
    </citation>
    <scope>SUBCELLULAR LOCATION</scope>
    <scope>HETEROMULTIMERIC COMPLEX FORMATION</scope>
    <scope>INTERACTION WITH FKBP4</scope>
    <scope>MECHANISM OF TRANSLOCATION TO THE NUCLEUS</scope>
</reference>
<reference key="16">
    <citation type="journal article" date="2001" name="J. Biol. Chem.">
        <title>Proteasome-mediated glucocorticoid receptor degradation restricts transcriptional signaling by glucocorticoids.</title>
        <authorList>
            <person name="Wallace A.D."/>
            <person name="Cidlowski J.A."/>
        </authorList>
    </citation>
    <scope>UBIQUITINATION AT LYS-435</scope>
    <scope>MUTAGENESIS OF LYS-435</scope>
    <scope>GLUCOCORTICOID-MEDIATED DOWN-REGULATION</scope>
</reference>
<reference key="17">
    <citation type="journal article" date="2001" name="Mol. Endocrinol.">
        <title>Molecular identification and characterization of A and B forms of the glucocorticoid receptor.</title>
        <authorList>
            <person name="Yudt M.R."/>
            <person name="Cidlowski J.A."/>
        </authorList>
    </citation>
    <scope>ALTERNATIVE INITIATION</scope>
    <scope>MUTAGENESIS OF MET-1 AND MET-28</scope>
</reference>
<reference key="18">
    <citation type="journal article" date="2002" name="J. Biol. Chem.">
        <title>A new first step in activation of steroid receptors: hormone-induced switching of FKBP51 and FKBP52 immunophilins.</title>
        <authorList>
            <person name="Davies T.H."/>
            <person name="Ning Y.M."/>
            <person name="Sanchez E.R."/>
        </authorList>
    </citation>
    <scope>HETEROMULTIMERIC COMPLEX FORMATION</scope>
    <scope>MECHANISM OF TRANSLOCATION TO THE NUCLEUS</scope>
</reference>
<reference key="19">
    <citation type="journal article" date="2003" name="Nat. Med.">
        <title>T-cell glucocorticoid receptor is required to suppress COX-2-mediated lethal immune activation.</title>
        <authorList>
            <person name="Brewer J.A."/>
            <person name="Khor B."/>
            <person name="Vogt S.K."/>
            <person name="Muglia L.M."/>
            <person name="Fujiwara H."/>
            <person name="Haegele K.E."/>
            <person name="Sleckman B.P."/>
            <person name="Muglia L.J."/>
        </authorList>
    </citation>
    <scope>INVOLVEMENT IN IMMUNE SYSTEM DEVELOPMENT</scope>
</reference>
<reference key="20">
    <citation type="journal article" date="2004" name="Genes Dev.">
        <title>Glucocorticoid receptor function in hepatocytes is essential to promote postnatal body growth.</title>
        <authorList>
            <person name="Tronche F."/>
            <person name="Opherk C."/>
            <person name="Moriggl R."/>
            <person name="Kellendonk C."/>
            <person name="Reimann A."/>
            <person name="Schwake L."/>
            <person name="Reichardt H.M."/>
            <person name="Stangl K."/>
            <person name="Gau D."/>
            <person name="Hoeflich A."/>
            <person name="Beug H."/>
            <person name="Schmid W."/>
            <person name="Schuetz G."/>
        </authorList>
    </citation>
    <scope>POSSIBLE FUNCTION IN THE CONTROL OF BODY GROWTH</scope>
</reference>
<reference key="21">
    <citation type="journal article" date="2010" name="Cell">
        <title>A tissue-specific atlas of mouse protein phosphorylation and expression.</title>
        <authorList>
            <person name="Huttlin E.L."/>
            <person name="Jedrychowski M.P."/>
            <person name="Elias J.E."/>
            <person name="Goswami T."/>
            <person name="Rad R."/>
            <person name="Beausoleil S.A."/>
            <person name="Villen J."/>
            <person name="Haas W."/>
            <person name="Sowa M.E."/>
            <person name="Gygi S.P."/>
        </authorList>
    </citation>
    <scope>PHOSPHORYLATION [LARGE SCALE ANALYSIS] AT SER-421</scope>
    <scope>IDENTIFICATION BY MASS SPECTROMETRY [LARGE SCALE ANALYSIS]</scope>
    <source>
        <tissue>Brain</tissue>
        <tissue>Brown adipose tissue</tissue>
        <tissue>Heart</tissue>
        <tissue>Kidney</tissue>
        <tissue>Liver</tissue>
        <tissue>Lung</tissue>
        <tissue>Pancreas</tissue>
    </source>
</reference>
<reference key="22">
    <citation type="journal article" date="2011" name="J. Biol. Chem.">
        <title>Protein phosphatase 5 mediates lipid metabolism through reciprocal control of glucocorticoid receptor and peroxisome proliferator-activated receptor-? (PPAR?).</title>
        <authorList>
            <person name="Hinds T.D. Jr."/>
            <person name="Stechschulte L.A."/>
            <person name="Cash H.A."/>
            <person name="Whisler D."/>
            <person name="Banerjee A."/>
            <person name="Yong W."/>
            <person name="Khuder S.S."/>
            <person name="Kaw M.K."/>
            <person name="Shou W."/>
            <person name="Najjar S.M."/>
            <person name="Sanchez E.R."/>
        </authorList>
    </citation>
    <scope>FUNCTION IN ADIPOGENESIS</scope>
    <scope>INTERACTION WITH FKBP5 AND PPP5C</scope>
    <scope>PHOSPHORYLATION AT SER-221; SER-229 AND SER-243</scope>
    <scope>DEPHOSPHORYLATION AT SER-221 AND SER-243 BY PPP5C</scope>
</reference>
<reference key="23">
    <citation type="journal article" date="2011" name="Nature">
        <title>Cryptochromes mediate rhythmic repression of the glucocorticoid receptor.</title>
        <authorList>
            <person name="Lamia K.A."/>
            <person name="Papp S.J."/>
            <person name="Yu R.T."/>
            <person name="Barish G.D."/>
            <person name="Uhlenhaut N.H."/>
            <person name="Jonker J.W."/>
            <person name="Downes M."/>
            <person name="Evans R.M."/>
        </authorList>
    </citation>
    <scope>INTERACTION WITH CRY1 AND CRY2</scope>
</reference>
<reference key="24">
    <citation type="journal article" date="2014" name="Mol. Cell. Proteomics">
        <title>Immunoaffinity enrichment and mass spectrometry analysis of protein methylation.</title>
        <authorList>
            <person name="Guo A."/>
            <person name="Gu H."/>
            <person name="Zhou J."/>
            <person name="Mulhern D."/>
            <person name="Wang Y."/>
            <person name="Lee K.A."/>
            <person name="Yang V."/>
            <person name="Aguiar M."/>
            <person name="Kornhauser J."/>
            <person name="Jia X."/>
            <person name="Ren J."/>
            <person name="Beausoleil S.A."/>
            <person name="Silva J.C."/>
            <person name="Vemulapalli V."/>
            <person name="Bedford M.T."/>
            <person name="Comb M.J."/>
        </authorList>
    </citation>
    <scope>METHYLATION [LARGE SCALE ANALYSIS] AT ARG-24</scope>
    <scope>IDENTIFICATION BY MASS SPECTROMETRY [LARGE SCALE ANALYSIS]</scope>
    <source>
        <tissue>Brain</tissue>
        <tissue>Embryo</tissue>
    </source>
</reference>
<reference key="25">
    <citation type="journal article" date="2014" name="PLoS Biol.">
        <title>A novel protein, CHRONO, functions as a core component of the mammalian circadian clock.</title>
        <authorList>
            <person name="Goriki A."/>
            <person name="Hatanaka F."/>
            <person name="Myung J."/>
            <person name="Kim J.K."/>
            <person name="Yoritaka T."/>
            <person name="Tanoue S."/>
            <person name="Abe T."/>
            <person name="Kiyonari H."/>
            <person name="Fujimoto K."/>
            <person name="Kato Y."/>
            <person name="Todo T."/>
            <person name="Matsubara A."/>
            <person name="Forger D."/>
            <person name="Takumi T."/>
        </authorList>
    </citation>
    <scope>INTERACTION WITH CIART</scope>
</reference>
<reference key="26">
    <citation type="journal article" date="2015" name="Proc. Natl. Acad. Sci. U.S.A.">
        <title>Glucocorticoid receptor regulates accurate chromosome segregation and is associated with malignancy.</title>
        <authorList>
            <person name="Matthews L.C."/>
            <person name="Berry A.A."/>
            <person name="Morgan D.J."/>
            <person name="Poolman T.M."/>
            <person name="Bauer K."/>
            <person name="Kramer F."/>
            <person name="Spiller D.G."/>
            <person name="Richardson R.V."/>
            <person name="Chapman K.E."/>
            <person name="Farrow S.N."/>
            <person name="Norman M.R."/>
            <person name="Williamson A.J."/>
            <person name="Whetton A.D."/>
            <person name="Taylor S.S."/>
            <person name="Tuckermann J.P."/>
            <person name="White M.R."/>
            <person name="Ray D.W."/>
        </authorList>
    </citation>
    <scope>FUNCTION</scope>
</reference>
<reference key="27">
    <citation type="journal article" date="2015" name="Steroids">
        <title>A hotspot in the glucocorticoid receptor DNA-binding domain susceptible to loss of function mutation.</title>
        <authorList>
            <person name="Banuelos J."/>
            <person name="Shin S.C."/>
            <person name="Lu N.Z."/>
        </authorList>
    </citation>
    <scope>SUBCELLULAR LOCATION</scope>
    <scope>MUTAGENESIS OF ARG-493</scope>
</reference>
<reference key="28">
    <citation type="journal article" date="2017" name="Proc. Natl. Acad. Sci. U.S.A.">
        <title>Circadian repressors CRY1 and CRY2 broadly interact with nuclear receptors and modulate transcriptional activity.</title>
        <authorList>
            <person name="Kriebs A."/>
            <person name="Jordan S.D."/>
            <person name="Soto E."/>
            <person name="Henriksson E."/>
            <person name="Sandate C.R."/>
            <person name="Vaughan M.E."/>
            <person name="Chan A.B."/>
            <person name="Duglan D."/>
            <person name="Papp S.J."/>
            <person name="Huber A.L."/>
            <person name="Afetian M.E."/>
            <person name="Yu R.T."/>
            <person name="Zhao X."/>
            <person name="Downes M."/>
            <person name="Evans R.M."/>
            <person name="Lamia K.A."/>
        </authorList>
    </citation>
    <scope>INTERACTION WITH CRY1 AND CRY2</scope>
</reference>
<reference key="29">
    <citation type="journal article" date="2016" name="J. Cell Sci.">
        <title>REV-ERBalpha influences the stability and nuclear localization of the glucocorticoid receptor.</title>
        <authorList>
            <person name="Okabe T."/>
            <person name="Chavan R."/>
            <person name="Fonseca Costa S.S."/>
            <person name="Brenna A."/>
            <person name="Ripperger J.A."/>
            <person name="Albrecht U."/>
        </authorList>
    </citation>
    <scope>INTERACTION WITH HSP90AA1 AND HSP90AB1</scope>
    <scope>SUBCELLULAR LOCATION</scope>
    <scope>TISSUE SPECIFICITY</scope>
</reference>
<reference key="30">
    <citation type="journal article" date="2019" name="Nucleic Acids Res.">
        <title>ARGLU1 is a transcriptional coactivator and splicing regulator important for stress hormone signaling and development.</title>
        <authorList>
            <person name="Magomedova L."/>
            <person name="Tiefenbach J."/>
            <person name="Zilberman E."/>
            <person name="Le Billan F."/>
            <person name="Voisin V."/>
            <person name="Saikali M."/>
            <person name="Boivin V."/>
            <person name="Robitaille M."/>
            <person name="Gueroussov S."/>
            <person name="Irimia M."/>
            <person name="Ray D."/>
            <person name="Patel R."/>
            <person name="Xu C."/>
            <person name="Jeyasuria P."/>
            <person name="Bader G.D."/>
            <person name="Hughes T.R."/>
            <person name="Morris Q.D."/>
            <person name="Scott M.S."/>
            <person name="Krause H."/>
            <person name="Angers S."/>
            <person name="Blencowe B.J."/>
            <person name="Cummins C.L."/>
        </authorList>
    </citation>
    <scope>TISSUE SPECIFICITY</scope>
    <scope>SUBCELLULAR LOCATION</scope>
</reference>
<accession>P06537</accession>
<accession>E0ZPU5</accession>
<accession>E9PUR6</accession>
<accession>E9PYV1</accession>
<accession>Q06VW2</accession>
<accession>Q3U126</accession>
<accession>Q3U2M7</accession>
<accession>Q61628</accession>
<accession>Q61629</accession>
<comment type="function">
    <text evidence="2 7 12">Receptor for glucocorticoids (GC). Has a dual mode of action: as a transcription factor that binds to glucocorticoid response elements (GRE), both for nuclear and mitochondrial DNA, and as a modulator of other transcription factors. Affects inflammatory responses, cellular proliferation and differentiation in target tissues. Involved in chromatin remodeling (PubMed:10678832). Plays a role in rapid mRNA degradation by binding to the 5' UTR of target mRNAs and interacting with PNRC2 in a ligand-dependent manner which recruits the RNA helicase UPF1 and the mRNA-decapping enzyme DCP1A, leading to RNA decay (By similarity). Could act as a coactivator for STAT5-dependent transcription upon growth hormone (GH) stimulation and could reveal an essential role of hepatic GR in the control of body growth (PubMed:15037546).</text>
</comment>
<comment type="function">
    <molecule>Isoform 1</molecule>
    <text evidence="2 18 22">Has transcriptional activation and repression activity (By similarity). Mediates glucocorticoid-induced apoptosis (By similarity). Promotes accurate chromosome segregation during mitosis (PubMed:25847991). May act as a tumor suppressor (PubMed:25847991). May play a negative role in adipogenesis through the regulation of lipolytic and antilipogenic gene expression (PubMed:21994940).</text>
</comment>
<comment type="function">
    <molecule>Isoform 3</molecule>
    <text evidence="2 17">Acts as a dominant negative inhibitor of isoform 1 (PubMed:20660300). Has intrinsic transcriptional activity independent of isoform Alpha when both isoforms are coexpressed (By similarity). Loses this transcription modulator function on its own (By similarity). Has no hormone-binding activity (PubMed:20660300). May play a role in controlling glucose metabolism by maintaining insulin sensitivity (PubMed:20660300). Reduces hepatic gluconeogenesis through down-regulation of PEPCK in an isoform Alpha-dependent manner (By similarity). Directly regulates STAT1 expression in isoform Alpha-independent manner (By similarity).</text>
</comment>
<comment type="subunit">
    <text evidence="2 3 7 8 9 18 19 20 23 24 27 28 29">Heteromultimeric cytoplasmic complex with HSP90AA1, HSPA1A/HSPA1B, and FKBP5 or another immunophilin such as PPID, STIP1, or the immunophilin homolog PPP5C (PubMed:21994940, PubMed:9195923). Upon ligand binding FKBP5 dissociates from the complex and FKBP4 takes its place, thereby linking the complex to dynein and mediating transport to the nucleus, where the complex dissociates (PubMed:11278753, PubMed:9195923). Probably forms a complex composed of chaperones HSP90 and HSP70, co-chaperones CDC37, PPP5C, TSC1 and client protein TSC2, CDK4, AKT, RAF1 and NR3C1; this complex does not contain co-chaperones STIP1/HOP and PTGES3/p23 (By similarity). Directly interacts with UNC45A (By similarity). Binds to DNA as a homodimer, and as heterodimer with NR3C2 or the retinoid X receptor. Binds STAT5A and STAT5B homodimers and heterodimers (PubMed:9528750). Interacts with NRIP1, POU2F1, POU2F2 and TRIM28 (PubMed:9742105). Interacts with several coactivator complexes, including the SMARCA4 complex, CREBBP/EP300, TADA2L (Ada complex) and p160 coactivators such as NCOA2 and NCOA6 (By similarity). Interaction with BAG1 inhibits transactivation (By similarity). Interacts with HEXIM1 and TGFB1I1 (PubMed:10848625). Interacts with NCOA1 (By similarity). Interacts with NCOA3, SMARCA4, SMARCC1, SMARCD1, and SMARCE1 (By similarity). Interacts with CLOCK, CRY1 and CRY2 in a ligand-dependent fashion (PubMed:22170608, PubMed:28751364). Interacts with CIART (PubMed:24736997). Interacts with RWDD3 (By similarity). Interacts with UBE2I/UBC9 and this interaction is enhanced in the presence of RWDD3 (By similarity). Interacts with GRIP1 (By similarity). Interacts with NR4A3 (via nuclear receptor DNA-binding domain), represses transcription activity of NR4A3 on the POMC promoter Nur response element (NurRE) (By similarity). Directly interacts with PNRC2 to attract and form a complex with UPF1 and DCP1A; the interaction leads to rapid mRNA degradation (By similarity). Interacts with GSK3B (By similarity). Interacts with FNIP1 and FNIP2 (By similarity). Interacts (via C-terminus) with HNRNPU (via C-terminus) (By similarity). Interacts with MCM3AP (By similarity). Interacts (via domain NR LBD) with HSP90AA1 and HSP90AB1 (PubMed:27686098). In the absence of hormonal ligand, interacts with TACC1 (By similarity). Interacts (via NR LBD domain) with ZNF764 (via KRAB domain); the interaction regulates transcription factor activity of NR3C1 by directing its actions toward certain biologic pathways (By similarity).</text>
</comment>
<comment type="interaction">
    <interactant intactId="EBI-492753">
        <id>P06537</id>
    </interactant>
    <interactant intactId="EBI-492834">
        <id>O88485</id>
        <label>Dync1i1</label>
    </interactant>
    <organismsDiffer>false</organismsDiffer>
    <experiments>2</experiments>
</comment>
<comment type="interaction">
    <interactant intactId="EBI-492753">
        <id>P06537</id>
    </interactant>
    <interactant intactId="EBI-492746">
        <id>P30416</id>
        <label>Fkbp4</label>
    </interactant>
    <organismsDiffer>false</organismsDiffer>
    <experiments>3</experiments>
</comment>
<comment type="interaction">
    <interactant intactId="EBI-492753">
        <id>P06537</id>
    </interactant>
    <interactant intactId="EBI-492796">
        <id>Q64378</id>
        <label>Fkbp5</label>
    </interactant>
    <organismsDiffer>false</organismsDiffer>
    <experiments>2</experiments>
</comment>
<comment type="interaction">
    <interactant intactId="EBI-492753">
        <id>P06537</id>
    </interactant>
    <interactant intactId="EBI-492813">
        <id>P11499</id>
        <label>Hsp90ab1</label>
    </interactant>
    <organismsDiffer>false</organismsDiffer>
    <experiments>2</experiments>
</comment>
<comment type="interaction">
    <interactant intactId="EBI-15959147">
        <id>P06537-1</id>
    </interactant>
    <interactant intactId="EBI-1266607">
        <id>P97784</id>
        <label>Cry1</label>
    </interactant>
    <organismsDiffer>false</organismsDiffer>
    <experiments>3</experiments>
</comment>
<comment type="interaction">
    <interactant intactId="EBI-15959147">
        <id>P06537-1</id>
    </interactant>
    <interactant intactId="EBI-1266619">
        <id>Q9R194</id>
        <label>Cry2</label>
    </interactant>
    <organismsDiffer>false</organismsDiffer>
    <experiments>3</experiments>
</comment>
<comment type="subcellular location">
    <subcellularLocation>
        <location evidence="9 21 23">Cytoplasm</location>
    </subcellularLocation>
    <subcellularLocation>
        <location evidence="7 9 21 23">Nucleus</location>
    </subcellularLocation>
    <subcellularLocation>
        <location evidence="2">Mitochondrion</location>
    </subcellularLocation>
    <subcellularLocation>
        <location evidence="2">Cytoplasm</location>
        <location evidence="2">Cytoskeleton</location>
        <location evidence="2">Spindle</location>
    </subcellularLocation>
    <subcellularLocation>
        <location evidence="2">Cytoplasm</location>
        <location evidence="2">Cytoskeleton</location>
        <location evidence="2">Microtubule organizing center</location>
        <location evidence="2">Centrosome</location>
    </subcellularLocation>
    <subcellularLocation>
        <location evidence="25">Chromosome</location>
    </subcellularLocation>
    <subcellularLocation>
        <location evidence="7">Nucleus</location>
        <location evidence="7">Nucleoplasm</location>
    </subcellularLocation>
    <text evidence="7 9 23 25">After ligand activation, translocates from the cytoplasm to the nucleus (PubMed:11278753). The hormone-occupied receptor undergoes rapid exchange between chromatin and the nucleoplasmic compartment (PubMed:10678832). In the presence of NR1D1 shows a time-dependent subcellular localization, localizing to the cytoplasm at ZT8 and to the nucleus at ZT20 (PubMed:27686098). Lacks this diurnal pattern of localization in the absence of NR1D1, localizing to both nucleus and the cytoplasm at ZT8 and ZT20 (PubMed:27686098). Upon dexamethasone binding associates with the glucocorticoid response elements of target genes (PubMed:30698747).</text>
</comment>
<comment type="subcellular location">
    <molecule>Isoform 1</molecule>
    <subcellularLocation>
        <location evidence="2">Cytoplasm</location>
    </subcellularLocation>
    <subcellularLocation>
        <location evidence="2">Nucleus</location>
    </subcellularLocation>
    <subcellularLocation>
        <location evidence="2">Mitochondrion</location>
    </subcellularLocation>
    <subcellularLocation>
        <location evidence="2">Cytoplasm</location>
        <location evidence="2">Cytoskeleton</location>
        <location evidence="2">Spindle</location>
    </subcellularLocation>
    <subcellularLocation>
        <location evidence="2">Cytoplasm</location>
        <location evidence="2">Cytoskeleton</location>
        <location evidence="2">Microtubule organizing center</location>
        <location evidence="2">Centrosome</location>
    </subcellularLocation>
    <text evidence="2">After ligand activation, translocates from the cytoplasm to the nucleus.</text>
</comment>
<comment type="subcellular location">
    <molecule>Isoform 3</molecule>
    <subcellularLocation>
        <location evidence="17">Nucleus</location>
    </subcellularLocation>
    <subcellularLocation>
        <location evidence="17">Cytoplasm</location>
    </subcellularLocation>
    <text evidence="17">Expressed predominantly in the nucleus with some expression also detected in the cytoplasm.</text>
</comment>
<comment type="alternative products">
    <event type="alternative splicing"/>
    <event type="alternative initiation"/>
    <isoform>
        <id>P06537-1</id>
        <name>1</name>
        <name>1-A</name>
        <name>GR form A</name>
        <name>Alpha</name>
        <sequence type="displayed"/>
    </isoform>
    <isoform>
        <id>P06537-2</id>
        <name>2</name>
        <name>2-A</name>
        <name>GR form B</name>
        <name>Gamma</name>
        <sequence type="described" ref="VSP_003704"/>
    </isoform>
    <isoform>
        <id>P06537-3</id>
        <name>1-B</name>
        <sequence type="described" ref="VSP_018774"/>
    </isoform>
    <isoform>
        <id>P06537-4</id>
        <name>2-B</name>
        <sequence type="described" ref="VSP_018774 VSP_003704"/>
    </isoform>
    <isoform>
        <id>P06537-5</id>
        <name>3</name>
        <name>Beta</name>
        <sequence type="described" ref="VSP_058320 VSP_058321"/>
    </isoform>
</comment>
<comment type="tissue specificity">
    <text evidence="17 23">Expressed in spleen, kidney and liver (PubMed:20660300). Expressed in a circadian manner in the liver (PubMed:27686098).</text>
</comment>
<comment type="tissue specificity">
    <molecule>Isoform 3</molecule>
    <text evidence="17">Expressed at highest level in spleen with lesser amounts in kidney and liver.</text>
</comment>
<comment type="induction">
    <molecule>Isoform 1</molecule>
    <text evidence="17">Down-regulated by glucocorticoids.</text>
</comment>
<comment type="induction">
    <molecule>Isoform 3</molecule>
    <text evidence="17">Up-regulated by glucocorticoids and insulin.</text>
</comment>
<comment type="domain">
    <text evidence="2">Composed of three domains: a modulating N-terminal domain, a DNA-binding domain and a C-terminal ligand-binding domain. The ligand-binding domain is required for correct chromosome segregation during mitosis although ligand binding is not required.</text>
</comment>
<comment type="PTM">
    <text evidence="2">Acetylation by CLOCK reduces its binding to glucocorticoid response elements and its transcriptional activity.</text>
</comment>
<comment type="PTM">
    <text evidence="11">Increased proteasome-mediated degradation in response to glucocorticoids.</text>
</comment>
<comment type="PTM">
    <text evidence="2 16 18">Phosphorylated in the absence of hormone; becomes hyperphosphorylated in the presence of glucocorticoids. Phosphorylated in the absence of hormone; becomes hyperphosphorylated in the presence of glucocorticoid. The Ser-221, Ser-243 and Ser-421-phosphorylated forms are mainly cytoplasmic, and the Ser-229-phosphorylated form is nuclear (By similarity). Phosphorylation at Ser-229 increases transcriptional activity (By similarity). Phosphorylation at Ser-221, Ser-243 and Ser-421 decreases signaling capacity (By similarity). Phosphorylation at Ser-421 may protect from glucocorticoid-induced apoptosis (By similarity). Phosphorylation at Ser-221 and Ser-229 is not required in regulation of chromosome segregation (By similarity). May be dephosphorylated by PPP5C, attenuates NR3C1 action (PubMed:21994940).</text>
</comment>
<comment type="PTM">
    <text evidence="3">Sumoylation at Lys-294 and Lys-310 negatively regulates its transcriptional activity. Sumoylation at Lys-718 positively regulates its transcriptional activity in the presence of RWDD3. Sumoylation at Lys-294 and Lys-310 is dispensable whereas sumoylation at Lys-718 is critical for the stimulatory effect of RWDD3 on its transcriptional activity. Heat shock increases sumoylation in a RWDD3-dependent manner.</text>
</comment>
<comment type="PTM">
    <text evidence="2 11">Ubiquitinated (PubMed:11555652). Ubiquitination by UBR5 leads to its degradation: UBR5 specifically recognizes and binds ligand-bound NR3C1 when it is not associated with coactivators (NCOAs) (By similarity). In presence of NCOAs, the UBR5-degron is not accessible, preventing its ubiquitination and degradation (By similarity).</text>
</comment>
<comment type="polymorphism">
    <text evidence="13 14 15 17 26">The poly-Gln region in 78-91 is polymorphic (PubMed:15489334, PubMed:16141072, PubMed:17012242, PubMed:20660300, PubMed:3780669). Polymorphism plays a role in complex mechanisms leading to lower corticosterone response to stress, and may also be associated with decreased locomotive and increased anxiety-type behaviors (PubMed:17012242).</text>
</comment>
<comment type="miscellaneous">
    <text>T-cell is a critical cellular target of GR, as immune activation in mice lacking GR resulted in significant mortality. This lethal activation is rescued by PTGS2 inhibition but not steroid administration or cytokine neutralization.</text>
</comment>
<comment type="miscellaneous">
    <molecule>Isoform 2</molecule>
    <text evidence="31">Produced by alternative splicing.</text>
</comment>
<comment type="miscellaneous">
    <molecule>Isoform 1-B</molecule>
    <text evidence="31">Produced by alternative initiation at Met-28 of isoform 1.</text>
</comment>
<comment type="miscellaneous">
    <molecule>Isoform 2-B</molecule>
    <text evidence="31">Produced by alternative initiation at Met-28 of isoform 2.</text>
</comment>
<comment type="similarity">
    <text evidence="31">Belongs to the nuclear hormone receptor family. NR3 subfamily.</text>
</comment>
<organism>
    <name type="scientific">Mus musculus</name>
    <name type="common">Mouse</name>
    <dbReference type="NCBI Taxonomy" id="10090"/>
    <lineage>
        <taxon>Eukaryota</taxon>
        <taxon>Metazoa</taxon>
        <taxon>Chordata</taxon>
        <taxon>Craniata</taxon>
        <taxon>Vertebrata</taxon>
        <taxon>Euteleostomi</taxon>
        <taxon>Mammalia</taxon>
        <taxon>Eutheria</taxon>
        <taxon>Euarchontoglires</taxon>
        <taxon>Glires</taxon>
        <taxon>Rodentia</taxon>
        <taxon>Myomorpha</taxon>
        <taxon>Muroidea</taxon>
        <taxon>Muridae</taxon>
        <taxon>Murinae</taxon>
        <taxon>Mus</taxon>
        <taxon>Mus</taxon>
    </lineage>
</organism>
<dbReference type="EMBL" id="X04435">
    <property type="protein sequence ID" value="CAA28031.1"/>
    <property type="molecule type" value="mRNA"/>
</dbReference>
<dbReference type="EMBL" id="DQ504162">
    <property type="protein sequence ID" value="ABF57998.1"/>
    <property type="molecule type" value="mRNA"/>
</dbReference>
<dbReference type="EMBL" id="HM236293">
    <property type="protein sequence ID" value="ADM18962.1"/>
    <property type="molecule type" value="mRNA"/>
</dbReference>
<dbReference type="EMBL" id="AK155200">
    <property type="protein sequence ID" value="BAE33113.1"/>
    <property type="molecule type" value="mRNA"/>
</dbReference>
<dbReference type="EMBL" id="AK156323">
    <property type="protein sequence ID" value="BAE33674.1"/>
    <property type="molecule type" value="mRNA"/>
</dbReference>
<dbReference type="EMBL" id="GL456180">
    <property type="status" value="NOT_ANNOTATED_CDS"/>
    <property type="molecule type" value="Genomic_DNA"/>
</dbReference>
<dbReference type="EMBL" id="BC129912">
    <property type="protein sequence ID" value="AAI29913.1"/>
    <property type="molecule type" value="mRNA"/>
</dbReference>
<dbReference type="EMBL" id="BC129913">
    <property type="protein sequence ID" value="AAI29914.1"/>
    <property type="molecule type" value="mRNA"/>
</dbReference>
<dbReference type="EMBL" id="X13358">
    <property type="protein sequence ID" value="CAA31738.1"/>
    <property type="molecule type" value="mRNA"/>
</dbReference>
<dbReference type="EMBL" id="X13359">
    <property type="protein sequence ID" value="CAA31739.1"/>
    <property type="molecule type" value="mRNA"/>
</dbReference>
<dbReference type="CCDS" id="CCDS37791.1">
    <molecule id="P06537-1"/>
</dbReference>
<dbReference type="PIR" id="A25691">
    <property type="entry name" value="A25691"/>
</dbReference>
<dbReference type="RefSeq" id="NP_001348138.1">
    <molecule id="P06537-1"/>
    <property type="nucleotide sequence ID" value="NM_001361209.1"/>
</dbReference>
<dbReference type="RefSeq" id="NP_001348139.1">
    <molecule id="P06537-1"/>
    <property type="nucleotide sequence ID" value="NM_001361210.1"/>
</dbReference>
<dbReference type="RefSeq" id="NP_001348140.1">
    <molecule id="P06537-1"/>
    <property type="nucleotide sequence ID" value="NM_001361211.1"/>
</dbReference>
<dbReference type="RefSeq" id="NP_001348141.1">
    <molecule id="P06537-1"/>
    <property type="nucleotide sequence ID" value="NM_001361212.1"/>
</dbReference>
<dbReference type="RefSeq" id="NP_032199.3">
    <molecule id="P06537-1"/>
    <property type="nucleotide sequence ID" value="NM_008173.4"/>
</dbReference>
<dbReference type="RefSeq" id="XP_006525721.1">
    <molecule id="P06537-2"/>
    <property type="nucleotide sequence ID" value="XM_006525658.3"/>
</dbReference>
<dbReference type="RefSeq" id="XP_006525722.1">
    <molecule id="P06537-2"/>
    <property type="nucleotide sequence ID" value="XM_006525659.5"/>
</dbReference>
<dbReference type="RefSeq" id="XP_006525723.1">
    <molecule id="P06537-2"/>
    <property type="nucleotide sequence ID" value="XM_006525660.4"/>
</dbReference>
<dbReference type="RefSeq" id="XP_006525724.1">
    <molecule id="P06537-2"/>
    <property type="nucleotide sequence ID" value="XM_006525661.4"/>
</dbReference>
<dbReference type="RefSeq" id="XP_006525725.1">
    <molecule id="P06537-2"/>
    <property type="nucleotide sequence ID" value="XM_006525662.3"/>
</dbReference>
<dbReference type="RefSeq" id="XP_006525726.1">
    <molecule id="P06537-2"/>
    <property type="nucleotide sequence ID" value="XM_006525663.5"/>
</dbReference>
<dbReference type="RefSeq" id="XP_006525727.1">
    <molecule id="P06537-2"/>
    <property type="nucleotide sequence ID" value="XM_006525664.3"/>
</dbReference>
<dbReference type="RefSeq" id="XP_006525728.1">
    <molecule id="P06537-2"/>
    <property type="nucleotide sequence ID" value="XM_006525665.5"/>
</dbReference>
<dbReference type="RefSeq" id="XP_006525729.1">
    <property type="nucleotide sequence ID" value="XM_006525666.3"/>
</dbReference>
<dbReference type="RefSeq" id="XP_017173324.1">
    <property type="nucleotide sequence ID" value="XM_017317835.1"/>
</dbReference>
<dbReference type="RefSeq" id="XP_017173325.1">
    <property type="nucleotide sequence ID" value="XM_017317836.1"/>
</dbReference>
<dbReference type="RefSeq" id="XP_017173326.1">
    <property type="nucleotide sequence ID" value="XM_017317837.1"/>
</dbReference>
<dbReference type="RefSeq" id="XP_017173327.1">
    <property type="nucleotide sequence ID" value="XM_017317838.1"/>
</dbReference>
<dbReference type="RefSeq" id="XP_030106198.1">
    <molecule id="P06537-1"/>
    <property type="nucleotide sequence ID" value="XM_030250338.2"/>
</dbReference>
<dbReference type="RefSeq" id="XP_030106199.1">
    <molecule id="P06537-1"/>
    <property type="nucleotide sequence ID" value="XM_030250339.2"/>
</dbReference>
<dbReference type="RefSeq" id="XP_036016883.1">
    <molecule id="P06537-1"/>
    <property type="nucleotide sequence ID" value="XM_036160990.1"/>
</dbReference>
<dbReference type="PDB" id="3MNE">
    <property type="method" value="X-ray"/>
    <property type="resolution" value="1.96 A"/>
    <property type="chains" value="A=536-792"/>
</dbReference>
<dbReference type="PDB" id="3MNO">
    <property type="method" value="X-ray"/>
    <property type="resolution" value="1.55 A"/>
    <property type="chains" value="A=536-792"/>
</dbReference>
<dbReference type="PDB" id="3MNP">
    <property type="method" value="X-ray"/>
    <property type="resolution" value="1.50 A"/>
    <property type="chains" value="A=536-792"/>
</dbReference>
<dbReference type="PDBsum" id="3MNE"/>
<dbReference type="PDBsum" id="3MNO"/>
<dbReference type="PDBsum" id="3MNP"/>
<dbReference type="SMR" id="P06537"/>
<dbReference type="CORUM" id="P06537"/>
<dbReference type="DIP" id="DIP-11N"/>
<dbReference type="FunCoup" id="P06537">
    <property type="interactions" value="1369"/>
</dbReference>
<dbReference type="IntAct" id="P06537">
    <property type="interactions" value="13"/>
</dbReference>
<dbReference type="MINT" id="P06537"/>
<dbReference type="STRING" id="10090.ENSMUSP00000111229"/>
<dbReference type="BindingDB" id="P06537"/>
<dbReference type="ChEMBL" id="CHEMBL3144"/>
<dbReference type="DrugCentral" id="P06537"/>
<dbReference type="GuidetoPHARMACOLOGY" id="625"/>
<dbReference type="GlyGen" id="P06537">
    <property type="glycosylation" value="4 sites, 2 N-linked glycans (2 sites), 1 O-linked glycan (2 sites)"/>
</dbReference>
<dbReference type="iPTMnet" id="P06537"/>
<dbReference type="PhosphoSitePlus" id="P06537"/>
<dbReference type="SwissPalm" id="P06537"/>
<dbReference type="jPOST" id="P06537"/>
<dbReference type="PaxDb" id="10090-ENSMUSP00000095199"/>
<dbReference type="PeptideAtlas" id="P06537"/>
<dbReference type="ProteomicsDB" id="271197">
    <molecule id="P06537-1"/>
</dbReference>
<dbReference type="ProteomicsDB" id="271198">
    <molecule id="P06537-2"/>
</dbReference>
<dbReference type="ProteomicsDB" id="271199">
    <molecule id="P06537-3"/>
</dbReference>
<dbReference type="ProteomicsDB" id="271200">
    <molecule id="P06537-4"/>
</dbReference>
<dbReference type="ProteomicsDB" id="271201">
    <molecule id="P06537-5"/>
</dbReference>
<dbReference type="ProteomicsDB" id="333325"/>
<dbReference type="ProteomicsDB" id="355014"/>
<dbReference type="Pumba" id="P06537"/>
<dbReference type="Antibodypedia" id="1329">
    <property type="antibodies" value="1324 antibodies from 45 providers"/>
</dbReference>
<dbReference type="DNASU" id="14815"/>
<dbReference type="Ensembl" id="ENSMUST00000025300.13">
    <molecule id="P06537-1"/>
    <property type="protein sequence ID" value="ENSMUSP00000025300.7"/>
    <property type="gene ID" value="ENSMUSG00000024431.16"/>
</dbReference>
<dbReference type="Ensembl" id="ENSMUST00000097592.9">
    <molecule id="P06537-2"/>
    <property type="protein sequence ID" value="ENSMUSP00000095199.3"/>
    <property type="gene ID" value="ENSMUSG00000024431.16"/>
</dbReference>
<dbReference type="Ensembl" id="ENSMUST00000115567.8">
    <molecule id="P06537-1"/>
    <property type="protein sequence ID" value="ENSMUSP00000111229.2"/>
    <property type="gene ID" value="ENSMUSG00000024431.16"/>
</dbReference>
<dbReference type="Ensembl" id="ENSMUST00000115571.8">
    <molecule id="P06537-1"/>
    <property type="protein sequence ID" value="ENSMUSP00000111233.2"/>
    <property type="gene ID" value="ENSMUSG00000024431.16"/>
</dbReference>
<dbReference type="GeneID" id="14815"/>
<dbReference type="KEGG" id="mmu:14815"/>
<dbReference type="UCSC" id="uc008esx.1">
    <property type="organism name" value="mouse"/>
</dbReference>
<dbReference type="AGR" id="MGI:95824"/>
<dbReference type="CTD" id="2908"/>
<dbReference type="MGI" id="MGI:95824">
    <property type="gene designation" value="Nr3c1"/>
</dbReference>
<dbReference type="VEuPathDB" id="HostDB:ENSMUSG00000024431"/>
<dbReference type="eggNOG" id="KOG3575">
    <property type="taxonomic scope" value="Eukaryota"/>
</dbReference>
<dbReference type="GeneTree" id="ENSGT00940000156385"/>
<dbReference type="HOGENOM" id="CLU_020317_0_0_1"/>
<dbReference type="InParanoid" id="P06537"/>
<dbReference type="OMA" id="GLYMGDT"/>
<dbReference type="OrthoDB" id="50437at9989"/>
<dbReference type="TreeFam" id="TF106510"/>
<dbReference type="Reactome" id="R-MMU-3371497">
    <property type="pathway name" value="HSP90 chaperone cycle for steroid hormone receptors (SHR) in the presence of ligand"/>
</dbReference>
<dbReference type="Reactome" id="R-MMU-383280">
    <property type="pathway name" value="Nuclear Receptor transcription pathway"/>
</dbReference>
<dbReference type="Reactome" id="R-MMU-4090294">
    <property type="pathway name" value="SUMOylation of intracellular receptors"/>
</dbReference>
<dbReference type="BioGRID-ORCS" id="14815">
    <property type="hits" value="1 hit in 83 CRISPR screens"/>
</dbReference>
<dbReference type="ChiTaRS" id="Nr3c1">
    <property type="organism name" value="mouse"/>
</dbReference>
<dbReference type="EvolutionaryTrace" id="P06537"/>
<dbReference type="PRO" id="PR:P06537"/>
<dbReference type="Proteomes" id="UP000000589">
    <property type="component" value="Chromosome 18"/>
</dbReference>
<dbReference type="RNAct" id="P06537">
    <property type="molecule type" value="protein"/>
</dbReference>
<dbReference type="Bgee" id="ENSMUSG00000024431">
    <property type="expression patterns" value="Expressed in median eminence of neurohypophysis and 273 other cell types or tissues"/>
</dbReference>
<dbReference type="GO" id="GO:0005813">
    <property type="term" value="C:centrosome"/>
    <property type="evidence" value="ECO:0007669"/>
    <property type="project" value="UniProtKB-SubCell"/>
</dbReference>
<dbReference type="GO" id="GO:0005694">
    <property type="term" value="C:chromosome"/>
    <property type="evidence" value="ECO:0007669"/>
    <property type="project" value="UniProtKB-SubCell"/>
</dbReference>
<dbReference type="GO" id="GO:0005737">
    <property type="term" value="C:cytoplasm"/>
    <property type="evidence" value="ECO:0000314"/>
    <property type="project" value="MGI"/>
</dbReference>
<dbReference type="GO" id="GO:0005829">
    <property type="term" value="C:cytosol"/>
    <property type="evidence" value="ECO:0000314"/>
    <property type="project" value="MGI"/>
</dbReference>
<dbReference type="GO" id="GO:0016020">
    <property type="term" value="C:membrane"/>
    <property type="evidence" value="ECO:0000314"/>
    <property type="project" value="MGI"/>
</dbReference>
<dbReference type="GO" id="GO:0005739">
    <property type="term" value="C:mitochondrion"/>
    <property type="evidence" value="ECO:0007669"/>
    <property type="project" value="UniProtKB-SubCell"/>
</dbReference>
<dbReference type="GO" id="GO:0016607">
    <property type="term" value="C:nuclear speck"/>
    <property type="evidence" value="ECO:0000250"/>
    <property type="project" value="UniProtKB"/>
</dbReference>
<dbReference type="GO" id="GO:0005654">
    <property type="term" value="C:nucleoplasm"/>
    <property type="evidence" value="ECO:0000304"/>
    <property type="project" value="Reactome"/>
</dbReference>
<dbReference type="GO" id="GO:0005634">
    <property type="term" value="C:nucleus"/>
    <property type="evidence" value="ECO:0000314"/>
    <property type="project" value="MGI"/>
</dbReference>
<dbReference type="GO" id="GO:0032991">
    <property type="term" value="C:protein-containing complex"/>
    <property type="evidence" value="ECO:0007669"/>
    <property type="project" value="Ensembl"/>
</dbReference>
<dbReference type="GO" id="GO:0005819">
    <property type="term" value="C:spindle"/>
    <property type="evidence" value="ECO:0007669"/>
    <property type="project" value="UniProtKB-SubCell"/>
</dbReference>
<dbReference type="GO" id="GO:0045202">
    <property type="term" value="C:synapse"/>
    <property type="evidence" value="ECO:0007669"/>
    <property type="project" value="GOC"/>
</dbReference>
<dbReference type="GO" id="GO:0001046">
    <property type="term" value="F:core promoter sequence-specific DNA binding"/>
    <property type="evidence" value="ECO:0007669"/>
    <property type="project" value="Ensembl"/>
</dbReference>
<dbReference type="GO" id="GO:0003677">
    <property type="term" value="F:DNA binding"/>
    <property type="evidence" value="ECO:0000314"/>
    <property type="project" value="MGI"/>
</dbReference>
<dbReference type="GO" id="GO:0001228">
    <property type="term" value="F:DNA-binding transcription activator activity, RNA polymerase II-specific"/>
    <property type="evidence" value="ECO:0007669"/>
    <property type="project" value="Ensembl"/>
</dbReference>
<dbReference type="GO" id="GO:0001227">
    <property type="term" value="F:DNA-binding transcription repressor activity, RNA polymerase II-specific"/>
    <property type="evidence" value="ECO:0007669"/>
    <property type="project" value="Ensembl"/>
</dbReference>
<dbReference type="GO" id="GO:0051879">
    <property type="term" value="F:Hsp90 protein binding"/>
    <property type="evidence" value="ECO:0007669"/>
    <property type="project" value="Ensembl"/>
</dbReference>
<dbReference type="GO" id="GO:0042802">
    <property type="term" value="F:identical protein binding"/>
    <property type="evidence" value="ECO:0000353"/>
    <property type="project" value="MGI"/>
</dbReference>
<dbReference type="GO" id="GO:0004883">
    <property type="term" value="F:nuclear glucocorticoid receptor activity"/>
    <property type="evidence" value="ECO:0000314"/>
    <property type="project" value="MGI"/>
</dbReference>
<dbReference type="GO" id="GO:0004879">
    <property type="term" value="F:nuclear receptor activity"/>
    <property type="evidence" value="ECO:0000250"/>
    <property type="project" value="UniProtKB"/>
</dbReference>
<dbReference type="GO" id="GO:1990841">
    <property type="term" value="F:promoter-specific chromatin binding"/>
    <property type="evidence" value="ECO:0000314"/>
    <property type="project" value="MGI"/>
</dbReference>
<dbReference type="GO" id="GO:0019901">
    <property type="term" value="F:protein kinase binding"/>
    <property type="evidence" value="ECO:0000353"/>
    <property type="project" value="ARUK-UCL"/>
</dbReference>
<dbReference type="GO" id="GO:0000978">
    <property type="term" value="F:RNA polymerase II cis-regulatory region sequence-specific DNA binding"/>
    <property type="evidence" value="ECO:0007669"/>
    <property type="project" value="Ensembl"/>
</dbReference>
<dbReference type="GO" id="GO:0043565">
    <property type="term" value="F:sequence-specific DNA binding"/>
    <property type="evidence" value="ECO:0000314"/>
    <property type="project" value="MGI"/>
</dbReference>
<dbReference type="GO" id="GO:0005496">
    <property type="term" value="F:steroid binding"/>
    <property type="evidence" value="ECO:0000250"/>
    <property type="project" value="UniProtKB"/>
</dbReference>
<dbReference type="GO" id="GO:1990239">
    <property type="term" value="F:steroid hormone binding"/>
    <property type="evidence" value="ECO:0000250"/>
    <property type="project" value="UniProtKB"/>
</dbReference>
<dbReference type="GO" id="GO:0017025">
    <property type="term" value="F:TBP-class protein binding"/>
    <property type="evidence" value="ECO:0007669"/>
    <property type="project" value="Ensembl"/>
</dbReference>
<dbReference type="GO" id="GO:0008270">
    <property type="term" value="F:zinc ion binding"/>
    <property type="evidence" value="ECO:0007669"/>
    <property type="project" value="UniProtKB-KW"/>
</dbReference>
<dbReference type="GO" id="GO:0030325">
    <property type="term" value="P:adrenal gland development"/>
    <property type="evidence" value="ECO:0000315"/>
    <property type="project" value="MGI"/>
</dbReference>
<dbReference type="GO" id="GO:0048708">
    <property type="term" value="P:astrocyte differentiation"/>
    <property type="evidence" value="ECO:0000315"/>
    <property type="project" value="MGI"/>
</dbReference>
<dbReference type="GO" id="GO:0071549">
    <property type="term" value="P:cellular response to dexamethasone stimulus"/>
    <property type="evidence" value="ECO:0007669"/>
    <property type="project" value="Ensembl"/>
</dbReference>
<dbReference type="GO" id="GO:0071560">
    <property type="term" value="P:cellular response to transforming growth factor beta stimulus"/>
    <property type="evidence" value="ECO:0007669"/>
    <property type="project" value="Ensembl"/>
</dbReference>
<dbReference type="GO" id="GO:0006325">
    <property type="term" value="P:chromatin organization"/>
    <property type="evidence" value="ECO:0007669"/>
    <property type="project" value="UniProtKB-KW"/>
</dbReference>
<dbReference type="GO" id="GO:0010467">
    <property type="term" value="P:gene expression"/>
    <property type="evidence" value="ECO:0000314"/>
    <property type="project" value="MGI"/>
</dbReference>
<dbReference type="GO" id="GO:0008211">
    <property type="term" value="P:glucocorticoid metabolic process"/>
    <property type="evidence" value="ECO:0000315"/>
    <property type="project" value="MGI"/>
</dbReference>
<dbReference type="GO" id="GO:0060603">
    <property type="term" value="P:mammary gland duct morphogenesis"/>
    <property type="evidence" value="ECO:0000315"/>
    <property type="project" value="MGI"/>
</dbReference>
<dbReference type="GO" id="GO:0042711">
    <property type="term" value="P:maternal behavior"/>
    <property type="evidence" value="ECO:0000316"/>
    <property type="project" value="MGI"/>
</dbReference>
<dbReference type="GO" id="GO:0014004">
    <property type="term" value="P:microglia differentiation"/>
    <property type="evidence" value="ECO:0000315"/>
    <property type="project" value="MGI"/>
</dbReference>
<dbReference type="GO" id="GO:0061744">
    <property type="term" value="P:motor behavior"/>
    <property type="evidence" value="ECO:0000315"/>
    <property type="project" value="MGI"/>
</dbReference>
<dbReference type="GO" id="GO:2000323">
    <property type="term" value="P:negative regulation of nuclear receptor-mediated glucocorticoid signaling pathway"/>
    <property type="evidence" value="ECO:0000314"/>
    <property type="project" value="MGI"/>
</dbReference>
<dbReference type="GO" id="GO:0150076">
    <property type="term" value="P:neuroinflammatory response"/>
    <property type="evidence" value="ECO:0000315"/>
    <property type="project" value="MGI"/>
</dbReference>
<dbReference type="GO" id="GO:0042921">
    <property type="term" value="P:nuclear receptor-mediated glucocorticoid signaling pathway"/>
    <property type="evidence" value="ECO:0000314"/>
    <property type="project" value="BHF-UCL"/>
</dbReference>
<dbReference type="GO" id="GO:1902895">
    <property type="term" value="P:positive regulation of miRNA transcription"/>
    <property type="evidence" value="ECO:0000314"/>
    <property type="project" value="BHF-UCL"/>
</dbReference>
<dbReference type="GO" id="GO:0043525">
    <property type="term" value="P:positive regulation of neuron apoptotic process"/>
    <property type="evidence" value="ECO:0000316"/>
    <property type="project" value="MGI"/>
</dbReference>
<dbReference type="GO" id="GO:0045944">
    <property type="term" value="P:positive regulation of transcription by RNA polymerase II"/>
    <property type="evidence" value="ECO:0000250"/>
    <property type="project" value="UniProtKB"/>
</dbReference>
<dbReference type="GO" id="GO:0006355">
    <property type="term" value="P:regulation of DNA-templated transcription"/>
    <property type="evidence" value="ECO:0000314"/>
    <property type="project" value="CAFA"/>
</dbReference>
<dbReference type="GO" id="GO:0031946">
    <property type="term" value="P:regulation of glucocorticoid biosynthetic process"/>
    <property type="evidence" value="ECO:0000315"/>
    <property type="project" value="MGI"/>
</dbReference>
<dbReference type="GO" id="GO:0006111">
    <property type="term" value="P:regulation of gluconeogenesis"/>
    <property type="evidence" value="ECO:0000315"/>
    <property type="project" value="MGI"/>
</dbReference>
<dbReference type="GO" id="GO:0051414">
    <property type="term" value="P:response to cortisol"/>
    <property type="evidence" value="ECO:0000314"/>
    <property type="project" value="MGI"/>
</dbReference>
<dbReference type="GO" id="GO:0009611">
    <property type="term" value="P:response to wounding"/>
    <property type="evidence" value="ECO:0000314"/>
    <property type="project" value="MGI"/>
</dbReference>
<dbReference type="GO" id="GO:0035249">
    <property type="term" value="P:synaptic transmission, glutamatergic"/>
    <property type="evidence" value="ECO:0000315"/>
    <property type="project" value="MGI"/>
</dbReference>
<dbReference type="CDD" id="cd07172">
    <property type="entry name" value="NR_DBD_GR_PR"/>
    <property type="match status" value="1"/>
</dbReference>
<dbReference type="CDD" id="cd07076">
    <property type="entry name" value="NR_LBD_GR"/>
    <property type="match status" value="1"/>
</dbReference>
<dbReference type="FunFam" id="1.10.565.10:FF:000004">
    <property type="entry name" value="Androgen receptor variant"/>
    <property type="match status" value="1"/>
</dbReference>
<dbReference type="FunFam" id="3.30.50.10:FF:000022">
    <property type="entry name" value="glucocorticoid receptor isoform X1"/>
    <property type="match status" value="1"/>
</dbReference>
<dbReference type="Gene3D" id="3.30.50.10">
    <property type="entry name" value="Erythroid Transcription Factor GATA-1, subunit A"/>
    <property type="match status" value="1"/>
</dbReference>
<dbReference type="Gene3D" id="1.10.565.10">
    <property type="entry name" value="Retinoid X Receptor"/>
    <property type="match status" value="1"/>
</dbReference>
<dbReference type="InterPro" id="IPR001409">
    <property type="entry name" value="Glcrtcd_rcpt"/>
</dbReference>
<dbReference type="InterPro" id="IPR035500">
    <property type="entry name" value="NHR-like_dom_sf"/>
</dbReference>
<dbReference type="InterPro" id="IPR000536">
    <property type="entry name" value="Nucl_hrmn_rcpt_lig-bd"/>
</dbReference>
<dbReference type="InterPro" id="IPR050200">
    <property type="entry name" value="Nuclear_hormone_rcpt_NR3"/>
</dbReference>
<dbReference type="InterPro" id="IPR001723">
    <property type="entry name" value="Nuclear_hrmn_rcpt"/>
</dbReference>
<dbReference type="InterPro" id="IPR001628">
    <property type="entry name" value="Znf_hrmn_rcpt"/>
</dbReference>
<dbReference type="InterPro" id="IPR013088">
    <property type="entry name" value="Znf_NHR/GATA"/>
</dbReference>
<dbReference type="PANTHER" id="PTHR48092">
    <property type="entry name" value="KNIRPS-RELATED PROTEIN-RELATED"/>
    <property type="match status" value="1"/>
</dbReference>
<dbReference type="Pfam" id="PF02155">
    <property type="entry name" value="GCR"/>
    <property type="match status" value="1"/>
</dbReference>
<dbReference type="Pfam" id="PF00104">
    <property type="entry name" value="Hormone_recep"/>
    <property type="match status" value="1"/>
</dbReference>
<dbReference type="Pfam" id="PF00105">
    <property type="entry name" value="zf-C4"/>
    <property type="match status" value="1"/>
</dbReference>
<dbReference type="PRINTS" id="PR00528">
    <property type="entry name" value="GLCORTICOIDR"/>
</dbReference>
<dbReference type="PRINTS" id="PR00398">
    <property type="entry name" value="STRDHORMONER"/>
</dbReference>
<dbReference type="PRINTS" id="PR00047">
    <property type="entry name" value="STROIDFINGER"/>
</dbReference>
<dbReference type="SMART" id="SM00430">
    <property type="entry name" value="HOLI"/>
    <property type="match status" value="1"/>
</dbReference>
<dbReference type="SMART" id="SM00399">
    <property type="entry name" value="ZnF_C4"/>
    <property type="match status" value="1"/>
</dbReference>
<dbReference type="SUPFAM" id="SSF57716">
    <property type="entry name" value="Glucocorticoid receptor-like (DNA-binding domain)"/>
    <property type="match status" value="1"/>
</dbReference>
<dbReference type="SUPFAM" id="SSF48508">
    <property type="entry name" value="Nuclear receptor ligand-binding domain"/>
    <property type="match status" value="1"/>
</dbReference>
<dbReference type="PROSITE" id="PS51843">
    <property type="entry name" value="NR_LBD"/>
    <property type="match status" value="1"/>
</dbReference>
<dbReference type="PROSITE" id="PS00031">
    <property type="entry name" value="NUCLEAR_REC_DBD_1"/>
    <property type="match status" value="1"/>
</dbReference>
<dbReference type="PROSITE" id="PS51030">
    <property type="entry name" value="NUCLEAR_REC_DBD_2"/>
    <property type="match status" value="1"/>
</dbReference>
<keyword id="KW-0002">3D-structure</keyword>
<keyword id="KW-0007">Acetylation</keyword>
<keyword id="KW-0024">Alternative initiation</keyword>
<keyword id="KW-0025">Alternative splicing</keyword>
<keyword id="KW-0156">Chromatin regulator</keyword>
<keyword id="KW-0158">Chromosome</keyword>
<keyword id="KW-0963">Cytoplasm</keyword>
<keyword id="KW-0206">Cytoskeleton</keyword>
<keyword id="KW-0238">DNA-binding</keyword>
<keyword id="KW-1017">Isopeptide bond</keyword>
<keyword id="KW-0446">Lipid-binding</keyword>
<keyword id="KW-0479">Metal-binding</keyword>
<keyword id="KW-0488">Methylation</keyword>
<keyword id="KW-0496">Mitochondrion</keyword>
<keyword id="KW-0539">Nucleus</keyword>
<keyword id="KW-0597">Phosphoprotein</keyword>
<keyword id="KW-0675">Receptor</keyword>
<keyword id="KW-1185">Reference proteome</keyword>
<keyword id="KW-0754">Steroid-binding</keyword>
<keyword id="KW-0804">Transcription</keyword>
<keyword id="KW-0805">Transcription regulation</keyword>
<keyword id="KW-0832">Ubl conjugation</keyword>
<keyword id="KW-0862">Zinc</keyword>
<keyword id="KW-0863">Zinc-finger</keyword>
<name>GCR_MOUSE</name>